<keyword id="KW-0488">Methylation</keyword>
<keyword id="KW-0687">Ribonucleoprotein</keyword>
<keyword id="KW-0689">Ribosomal protein</keyword>
<keyword id="KW-0694">RNA-binding</keyword>
<keyword id="KW-0699">rRNA-binding</keyword>
<accession>A8GKJ7</accession>
<organism>
    <name type="scientific">Serratia proteamaculans (strain 568)</name>
    <dbReference type="NCBI Taxonomy" id="399741"/>
    <lineage>
        <taxon>Bacteria</taxon>
        <taxon>Pseudomonadati</taxon>
        <taxon>Pseudomonadota</taxon>
        <taxon>Gammaproteobacteria</taxon>
        <taxon>Enterobacterales</taxon>
        <taxon>Yersiniaceae</taxon>
        <taxon>Serratia</taxon>
    </lineage>
</organism>
<protein>
    <recommendedName>
        <fullName evidence="1">Large ribosomal subunit protein uL3</fullName>
    </recommendedName>
    <alternativeName>
        <fullName evidence="3">50S ribosomal protein L3</fullName>
    </alternativeName>
</protein>
<evidence type="ECO:0000255" key="1">
    <source>
        <dbReference type="HAMAP-Rule" id="MF_01325"/>
    </source>
</evidence>
<evidence type="ECO:0000256" key="2">
    <source>
        <dbReference type="SAM" id="MobiDB-lite"/>
    </source>
</evidence>
<evidence type="ECO:0000305" key="3"/>
<feature type="chain" id="PRO_1000067570" description="Large ribosomal subunit protein uL3">
    <location>
        <begin position="1"/>
        <end position="209"/>
    </location>
</feature>
<feature type="region of interest" description="Disordered" evidence="2">
    <location>
        <begin position="133"/>
        <end position="153"/>
    </location>
</feature>
<feature type="modified residue" description="N5-methylglutamine" evidence="1">
    <location>
        <position position="150"/>
    </location>
</feature>
<gene>
    <name evidence="1" type="primary">rplC</name>
    <name type="ordered locus">Spro_4544</name>
</gene>
<sequence length="209" mass="22235">MIGLVGKKLGMTRIFTEDGVSIPVTVIEIEANRVTQVKDLANDGYRAVQVTTGSKKANRVTKPEAGHFAKAGVEAGRGLWEFRTAEGEEFTAGQNISVEIFAEVKKVDVTGTSKGKGFAGTVKRWNFRTQDATHGNSLSHRVPGSIGQNQTPGKVFKGKKMAGHLGDERVTVQSLDVVRVDAERNLLLVKGAVPGATGGNLIVKPAVKA</sequence>
<name>RL3_SERP5</name>
<reference key="1">
    <citation type="submission" date="2007-09" db="EMBL/GenBank/DDBJ databases">
        <title>Complete sequence of chromosome of Serratia proteamaculans 568.</title>
        <authorList>
            <consortium name="US DOE Joint Genome Institute"/>
            <person name="Copeland A."/>
            <person name="Lucas S."/>
            <person name="Lapidus A."/>
            <person name="Barry K."/>
            <person name="Glavina del Rio T."/>
            <person name="Dalin E."/>
            <person name="Tice H."/>
            <person name="Pitluck S."/>
            <person name="Chain P."/>
            <person name="Malfatti S."/>
            <person name="Shin M."/>
            <person name="Vergez L."/>
            <person name="Schmutz J."/>
            <person name="Larimer F."/>
            <person name="Land M."/>
            <person name="Hauser L."/>
            <person name="Kyrpides N."/>
            <person name="Kim E."/>
            <person name="Taghavi S."/>
            <person name="Newman L."/>
            <person name="Vangronsveld J."/>
            <person name="van der Lelie D."/>
            <person name="Richardson P."/>
        </authorList>
    </citation>
    <scope>NUCLEOTIDE SEQUENCE [LARGE SCALE GENOMIC DNA]</scope>
    <source>
        <strain>568</strain>
    </source>
</reference>
<proteinExistence type="inferred from homology"/>
<dbReference type="EMBL" id="CP000826">
    <property type="protein sequence ID" value="ABV43637.1"/>
    <property type="molecule type" value="Genomic_DNA"/>
</dbReference>
<dbReference type="SMR" id="A8GKJ7"/>
<dbReference type="STRING" id="399741.Spro_4544"/>
<dbReference type="KEGG" id="spe:Spro_4544"/>
<dbReference type="eggNOG" id="COG0087">
    <property type="taxonomic scope" value="Bacteria"/>
</dbReference>
<dbReference type="HOGENOM" id="CLU_044142_4_1_6"/>
<dbReference type="OrthoDB" id="9806135at2"/>
<dbReference type="GO" id="GO:0022625">
    <property type="term" value="C:cytosolic large ribosomal subunit"/>
    <property type="evidence" value="ECO:0007669"/>
    <property type="project" value="TreeGrafter"/>
</dbReference>
<dbReference type="GO" id="GO:0019843">
    <property type="term" value="F:rRNA binding"/>
    <property type="evidence" value="ECO:0007669"/>
    <property type="project" value="UniProtKB-UniRule"/>
</dbReference>
<dbReference type="GO" id="GO:0003735">
    <property type="term" value="F:structural constituent of ribosome"/>
    <property type="evidence" value="ECO:0007669"/>
    <property type="project" value="InterPro"/>
</dbReference>
<dbReference type="GO" id="GO:0006412">
    <property type="term" value="P:translation"/>
    <property type="evidence" value="ECO:0007669"/>
    <property type="project" value="UniProtKB-UniRule"/>
</dbReference>
<dbReference type="FunFam" id="2.40.30.10:FF:000004">
    <property type="entry name" value="50S ribosomal protein L3"/>
    <property type="match status" value="1"/>
</dbReference>
<dbReference type="FunFam" id="3.30.160.810:FF:000001">
    <property type="entry name" value="50S ribosomal protein L3"/>
    <property type="match status" value="1"/>
</dbReference>
<dbReference type="Gene3D" id="3.30.160.810">
    <property type="match status" value="1"/>
</dbReference>
<dbReference type="Gene3D" id="2.40.30.10">
    <property type="entry name" value="Translation factors"/>
    <property type="match status" value="1"/>
</dbReference>
<dbReference type="HAMAP" id="MF_01325_B">
    <property type="entry name" value="Ribosomal_uL3_B"/>
    <property type="match status" value="1"/>
</dbReference>
<dbReference type="InterPro" id="IPR000597">
    <property type="entry name" value="Ribosomal_uL3"/>
</dbReference>
<dbReference type="InterPro" id="IPR019927">
    <property type="entry name" value="Ribosomal_uL3_bac/org-type"/>
</dbReference>
<dbReference type="InterPro" id="IPR019926">
    <property type="entry name" value="Ribosomal_uL3_CS"/>
</dbReference>
<dbReference type="InterPro" id="IPR009000">
    <property type="entry name" value="Transl_B-barrel_sf"/>
</dbReference>
<dbReference type="NCBIfam" id="TIGR03625">
    <property type="entry name" value="L3_bact"/>
    <property type="match status" value="1"/>
</dbReference>
<dbReference type="PANTHER" id="PTHR11229">
    <property type="entry name" value="50S RIBOSOMAL PROTEIN L3"/>
    <property type="match status" value="1"/>
</dbReference>
<dbReference type="PANTHER" id="PTHR11229:SF16">
    <property type="entry name" value="LARGE RIBOSOMAL SUBUNIT PROTEIN UL3C"/>
    <property type="match status" value="1"/>
</dbReference>
<dbReference type="Pfam" id="PF00297">
    <property type="entry name" value="Ribosomal_L3"/>
    <property type="match status" value="1"/>
</dbReference>
<dbReference type="SUPFAM" id="SSF50447">
    <property type="entry name" value="Translation proteins"/>
    <property type="match status" value="1"/>
</dbReference>
<dbReference type="PROSITE" id="PS00474">
    <property type="entry name" value="RIBOSOMAL_L3"/>
    <property type="match status" value="1"/>
</dbReference>
<comment type="function">
    <text evidence="1">One of the primary rRNA binding proteins, it binds directly near the 3'-end of the 23S rRNA, where it nucleates assembly of the 50S subunit.</text>
</comment>
<comment type="subunit">
    <text evidence="1">Part of the 50S ribosomal subunit. Forms a cluster with proteins L14 and L19.</text>
</comment>
<comment type="PTM">
    <text evidence="1">Methylated by PrmB.</text>
</comment>
<comment type="similarity">
    <text evidence="1">Belongs to the universal ribosomal protein uL3 family.</text>
</comment>